<comment type="function">
    <text evidence="1">Catalyzes the addition and repair of the essential 3'-terminal CCA sequence in tRNAs without using a nucleic acid template. Adds these three nucleotides in the order of C, C, and A to the tRNA nucleotide-73, using CTP and ATP as substrates and producing inorganic pyrophosphate. tRNA 3'-terminal CCA addition is required both for tRNA processing and repair. Also involved in tRNA surveillance by mediating tandem CCA addition to generate a CCACCA at the 3' terminus of unstable tRNAs. While stable tRNAs receive only 3'-terminal CCA, unstable tRNAs are marked with CCACCA and rapidly degraded.</text>
</comment>
<comment type="catalytic activity">
    <reaction evidence="1">
        <text>a tRNA precursor + 2 CTP + ATP = a tRNA with a 3' CCA end + 3 diphosphate</text>
        <dbReference type="Rhea" id="RHEA:14433"/>
        <dbReference type="Rhea" id="RHEA-COMP:10465"/>
        <dbReference type="Rhea" id="RHEA-COMP:10468"/>
        <dbReference type="ChEBI" id="CHEBI:30616"/>
        <dbReference type="ChEBI" id="CHEBI:33019"/>
        <dbReference type="ChEBI" id="CHEBI:37563"/>
        <dbReference type="ChEBI" id="CHEBI:74896"/>
        <dbReference type="ChEBI" id="CHEBI:83071"/>
        <dbReference type="EC" id="2.7.7.72"/>
    </reaction>
</comment>
<comment type="catalytic activity">
    <reaction evidence="1">
        <text>a tRNA with a 3' CCA end + 2 CTP + ATP = a tRNA with a 3' CCACCA end + 3 diphosphate</text>
        <dbReference type="Rhea" id="RHEA:76235"/>
        <dbReference type="Rhea" id="RHEA-COMP:10468"/>
        <dbReference type="Rhea" id="RHEA-COMP:18655"/>
        <dbReference type="ChEBI" id="CHEBI:30616"/>
        <dbReference type="ChEBI" id="CHEBI:33019"/>
        <dbReference type="ChEBI" id="CHEBI:37563"/>
        <dbReference type="ChEBI" id="CHEBI:83071"/>
        <dbReference type="ChEBI" id="CHEBI:195187"/>
    </reaction>
    <physiologicalReaction direction="left-to-right" evidence="1">
        <dbReference type="Rhea" id="RHEA:76236"/>
    </physiologicalReaction>
</comment>
<comment type="cofactor">
    <cofactor evidence="1">
        <name>Mg(2+)</name>
        <dbReference type="ChEBI" id="CHEBI:18420"/>
    </cofactor>
    <text evidence="1">Magnesium is required for nucleotidyltransferase activity.</text>
</comment>
<comment type="cofactor">
    <cofactor evidence="1">
        <name>Ni(2+)</name>
        <dbReference type="ChEBI" id="CHEBI:49786"/>
    </cofactor>
    <text evidence="1">Nickel for phosphatase activity.</text>
</comment>
<comment type="subunit">
    <text evidence="1">Monomer. Can also form homodimers and oligomers.</text>
</comment>
<comment type="domain">
    <text evidence="1">Comprises two domains: an N-terminal domain containing the nucleotidyltransferase activity and a C-terminal HD domain associated with both phosphodiesterase and phosphatase activities.</text>
</comment>
<comment type="miscellaneous">
    <text evidence="1">A single active site specifically recognizes both ATP and CTP and is responsible for their addition.</text>
</comment>
<comment type="similarity">
    <text evidence="1">Belongs to the tRNA nucleotidyltransferase/poly(A) polymerase family. Bacterial CCA-adding enzyme type 1 subfamily.</text>
</comment>
<sequence>MKIYAVGGAIRDALLGLPVRDRDYVVVGATPEQMAAQRFRPVGKDFPVFLHPDTHEEYALARTERKTAAGYHGFQFYYAPDVTLEQDLVRRDLTINAMAREVSPDGALVGPVVDPFGGQADLRAKLFRHVGDAFVEDPVRILRVARFAARFAEFAVAPDTAALMRAMVDAGEVDALVPERVWQELARGLMEAKPSRMFAVLRECGALARILPEIDALFGVPQRADYHPEVDTGVHVMMVIDHAAKQGYSLAVRFAALTHDLGKATTPADVLPRHIGHEGRSVDLLKPLCERLRVPNECRDLALVVAREHGNLHRVMEMGAAALVRLLERADALRKPARFAEALQASEADARGRLGLETKPYPQAERLRQALVAARAVDAGAIAQGLAGEPAKIKDAVHRARVRAVAQAVGVAD</sequence>
<proteinExistence type="inferred from homology"/>
<organism>
    <name type="scientific">Burkholderia pseudomallei (strain K96243)</name>
    <dbReference type="NCBI Taxonomy" id="272560"/>
    <lineage>
        <taxon>Bacteria</taxon>
        <taxon>Pseudomonadati</taxon>
        <taxon>Pseudomonadota</taxon>
        <taxon>Betaproteobacteria</taxon>
        <taxon>Burkholderiales</taxon>
        <taxon>Burkholderiaceae</taxon>
        <taxon>Burkholderia</taxon>
        <taxon>pseudomallei group</taxon>
    </lineage>
</organism>
<name>CCA_BURPS</name>
<keyword id="KW-0067">ATP-binding</keyword>
<keyword id="KW-0378">Hydrolase</keyword>
<keyword id="KW-0460">Magnesium</keyword>
<keyword id="KW-0479">Metal-binding</keyword>
<keyword id="KW-0511">Multifunctional enzyme</keyword>
<keyword id="KW-0533">Nickel</keyword>
<keyword id="KW-0547">Nucleotide-binding</keyword>
<keyword id="KW-0548">Nucleotidyltransferase</keyword>
<keyword id="KW-1185">Reference proteome</keyword>
<keyword id="KW-0692">RNA repair</keyword>
<keyword id="KW-0694">RNA-binding</keyword>
<keyword id="KW-0808">Transferase</keyword>
<keyword id="KW-0819">tRNA processing</keyword>
<accession>Q63YC3</accession>
<protein>
    <recommendedName>
        <fullName evidence="1">Multifunctional CCA protein</fullName>
    </recommendedName>
    <domain>
        <recommendedName>
            <fullName evidence="1">CCA-adding enzyme</fullName>
            <ecNumber evidence="1">2.7.7.72</ecNumber>
        </recommendedName>
        <alternativeName>
            <fullName evidence="1">CCA tRNA nucleotidyltransferase</fullName>
        </alternativeName>
        <alternativeName>
            <fullName evidence="1">tRNA CCA-pyrophosphorylase</fullName>
        </alternativeName>
        <alternativeName>
            <fullName evidence="1">tRNA adenylyl-/cytidylyl-transferase</fullName>
        </alternativeName>
        <alternativeName>
            <fullName evidence="1">tRNA nucleotidyltransferase</fullName>
        </alternativeName>
        <alternativeName>
            <fullName evidence="1">tRNA-NT</fullName>
        </alternativeName>
    </domain>
    <domain>
        <recommendedName>
            <fullName evidence="1">2'-nucleotidase</fullName>
            <ecNumber evidence="1">3.1.3.-</ecNumber>
        </recommendedName>
    </domain>
    <domain>
        <recommendedName>
            <fullName evidence="1">2',3'-cyclic phosphodiesterase</fullName>
            <ecNumber evidence="1">3.1.4.-</ecNumber>
        </recommendedName>
    </domain>
    <domain>
        <recommendedName>
            <fullName evidence="1">Phosphatase</fullName>
            <ecNumber evidence="1">3.1.3.-</ecNumber>
        </recommendedName>
    </domain>
</protein>
<feature type="chain" id="PRO_0000138973" description="Multifunctional CCA protein">
    <location>
        <begin position="1"/>
        <end position="413"/>
    </location>
</feature>
<feature type="domain" description="HD" evidence="1">
    <location>
        <begin position="232"/>
        <end position="333"/>
    </location>
</feature>
<feature type="binding site" evidence="1">
    <location>
        <position position="8"/>
    </location>
    <ligand>
        <name>ATP</name>
        <dbReference type="ChEBI" id="CHEBI:30616"/>
    </ligand>
</feature>
<feature type="binding site" evidence="1">
    <location>
        <position position="8"/>
    </location>
    <ligand>
        <name>CTP</name>
        <dbReference type="ChEBI" id="CHEBI:37563"/>
    </ligand>
</feature>
<feature type="binding site" evidence="1">
    <location>
        <position position="11"/>
    </location>
    <ligand>
        <name>ATP</name>
        <dbReference type="ChEBI" id="CHEBI:30616"/>
    </ligand>
</feature>
<feature type="binding site" evidence="1">
    <location>
        <position position="11"/>
    </location>
    <ligand>
        <name>CTP</name>
        <dbReference type="ChEBI" id="CHEBI:37563"/>
    </ligand>
</feature>
<feature type="binding site" evidence="1">
    <location>
        <position position="21"/>
    </location>
    <ligand>
        <name>Mg(2+)</name>
        <dbReference type="ChEBI" id="CHEBI:18420"/>
    </ligand>
</feature>
<feature type="binding site" evidence="1">
    <location>
        <position position="23"/>
    </location>
    <ligand>
        <name>Mg(2+)</name>
        <dbReference type="ChEBI" id="CHEBI:18420"/>
    </ligand>
</feature>
<feature type="binding site" evidence="1">
    <location>
        <position position="91"/>
    </location>
    <ligand>
        <name>ATP</name>
        <dbReference type="ChEBI" id="CHEBI:30616"/>
    </ligand>
</feature>
<feature type="binding site" evidence="1">
    <location>
        <position position="91"/>
    </location>
    <ligand>
        <name>CTP</name>
        <dbReference type="ChEBI" id="CHEBI:37563"/>
    </ligand>
</feature>
<feature type="binding site" evidence="1">
    <location>
        <position position="143"/>
    </location>
    <ligand>
        <name>ATP</name>
        <dbReference type="ChEBI" id="CHEBI:30616"/>
    </ligand>
</feature>
<feature type="binding site" evidence="1">
    <location>
        <position position="143"/>
    </location>
    <ligand>
        <name>CTP</name>
        <dbReference type="ChEBI" id="CHEBI:37563"/>
    </ligand>
</feature>
<feature type="binding site" evidence="1">
    <location>
        <position position="146"/>
    </location>
    <ligand>
        <name>ATP</name>
        <dbReference type="ChEBI" id="CHEBI:30616"/>
    </ligand>
</feature>
<feature type="binding site" evidence="1">
    <location>
        <position position="146"/>
    </location>
    <ligand>
        <name>CTP</name>
        <dbReference type="ChEBI" id="CHEBI:37563"/>
    </ligand>
</feature>
<dbReference type="EC" id="2.7.7.72" evidence="1"/>
<dbReference type="EC" id="3.1.3.-" evidence="1"/>
<dbReference type="EC" id="3.1.4.-" evidence="1"/>
<dbReference type="EMBL" id="BX571965">
    <property type="protein sequence ID" value="CAH34253.1"/>
    <property type="molecule type" value="Genomic_DNA"/>
</dbReference>
<dbReference type="RefSeq" id="WP_004525896.1">
    <property type="nucleotide sequence ID" value="NZ_CP009538.1"/>
</dbReference>
<dbReference type="RefSeq" id="YP_106892.1">
    <property type="nucleotide sequence ID" value="NC_006350.1"/>
</dbReference>
<dbReference type="SMR" id="Q63YC3"/>
<dbReference type="STRING" id="272560.BPSL0265"/>
<dbReference type="KEGG" id="bps:BPSL0265"/>
<dbReference type="PATRIC" id="fig|272560.51.peg.1443"/>
<dbReference type="eggNOG" id="COG0617">
    <property type="taxonomic scope" value="Bacteria"/>
</dbReference>
<dbReference type="Proteomes" id="UP000000605">
    <property type="component" value="Chromosome 1"/>
</dbReference>
<dbReference type="GO" id="GO:0005524">
    <property type="term" value="F:ATP binding"/>
    <property type="evidence" value="ECO:0007669"/>
    <property type="project" value="UniProtKB-UniRule"/>
</dbReference>
<dbReference type="GO" id="GO:0004810">
    <property type="term" value="F:CCA tRNA nucleotidyltransferase activity"/>
    <property type="evidence" value="ECO:0007669"/>
    <property type="project" value="UniProtKB-UniRule"/>
</dbReference>
<dbReference type="GO" id="GO:0004112">
    <property type="term" value="F:cyclic-nucleotide phosphodiesterase activity"/>
    <property type="evidence" value="ECO:0007669"/>
    <property type="project" value="UniProtKB-UniRule"/>
</dbReference>
<dbReference type="GO" id="GO:0000287">
    <property type="term" value="F:magnesium ion binding"/>
    <property type="evidence" value="ECO:0007669"/>
    <property type="project" value="UniProtKB-UniRule"/>
</dbReference>
<dbReference type="GO" id="GO:0016791">
    <property type="term" value="F:phosphatase activity"/>
    <property type="evidence" value="ECO:0007669"/>
    <property type="project" value="UniProtKB-UniRule"/>
</dbReference>
<dbReference type="GO" id="GO:0000049">
    <property type="term" value="F:tRNA binding"/>
    <property type="evidence" value="ECO:0007669"/>
    <property type="project" value="UniProtKB-UniRule"/>
</dbReference>
<dbReference type="GO" id="GO:0042245">
    <property type="term" value="P:RNA repair"/>
    <property type="evidence" value="ECO:0007669"/>
    <property type="project" value="UniProtKB-KW"/>
</dbReference>
<dbReference type="GO" id="GO:0001680">
    <property type="term" value="P:tRNA 3'-terminal CCA addition"/>
    <property type="evidence" value="ECO:0007669"/>
    <property type="project" value="UniProtKB-UniRule"/>
</dbReference>
<dbReference type="CDD" id="cd05398">
    <property type="entry name" value="NT_ClassII-CCAase"/>
    <property type="match status" value="1"/>
</dbReference>
<dbReference type="Gene3D" id="3.30.460.10">
    <property type="entry name" value="Beta Polymerase, domain 2"/>
    <property type="match status" value="1"/>
</dbReference>
<dbReference type="Gene3D" id="1.10.3090.10">
    <property type="entry name" value="cca-adding enzyme, domain 2"/>
    <property type="match status" value="1"/>
</dbReference>
<dbReference type="HAMAP" id="MF_01261">
    <property type="entry name" value="CCA_bact_type1"/>
    <property type="match status" value="1"/>
</dbReference>
<dbReference type="HAMAP" id="MF_01262">
    <property type="entry name" value="CCA_bact_type2"/>
    <property type="match status" value="1"/>
</dbReference>
<dbReference type="InterPro" id="IPR012006">
    <property type="entry name" value="CCA_bact"/>
</dbReference>
<dbReference type="InterPro" id="IPR006674">
    <property type="entry name" value="HD_domain"/>
</dbReference>
<dbReference type="InterPro" id="IPR043519">
    <property type="entry name" value="NT_sf"/>
</dbReference>
<dbReference type="InterPro" id="IPR002646">
    <property type="entry name" value="PolA_pol_head_dom"/>
</dbReference>
<dbReference type="InterPro" id="IPR032828">
    <property type="entry name" value="PolyA_RNA-bd"/>
</dbReference>
<dbReference type="InterPro" id="IPR050124">
    <property type="entry name" value="tRNA_CCA-adding_enzyme"/>
</dbReference>
<dbReference type="NCBIfam" id="NF008137">
    <property type="entry name" value="PRK10885.1"/>
    <property type="match status" value="1"/>
</dbReference>
<dbReference type="PANTHER" id="PTHR47545">
    <property type="entry name" value="MULTIFUNCTIONAL CCA PROTEIN"/>
    <property type="match status" value="1"/>
</dbReference>
<dbReference type="PANTHER" id="PTHR47545:SF1">
    <property type="entry name" value="MULTIFUNCTIONAL CCA PROTEIN"/>
    <property type="match status" value="1"/>
</dbReference>
<dbReference type="Pfam" id="PF01966">
    <property type="entry name" value="HD"/>
    <property type="match status" value="1"/>
</dbReference>
<dbReference type="Pfam" id="PF01743">
    <property type="entry name" value="PolyA_pol"/>
    <property type="match status" value="1"/>
</dbReference>
<dbReference type="Pfam" id="PF12627">
    <property type="entry name" value="PolyA_pol_RNAbd"/>
    <property type="match status" value="1"/>
</dbReference>
<dbReference type="PIRSF" id="PIRSF000813">
    <property type="entry name" value="CCA_bact"/>
    <property type="match status" value="1"/>
</dbReference>
<dbReference type="SUPFAM" id="SSF81301">
    <property type="entry name" value="Nucleotidyltransferase"/>
    <property type="match status" value="1"/>
</dbReference>
<dbReference type="SUPFAM" id="SSF81891">
    <property type="entry name" value="Poly A polymerase C-terminal region-like"/>
    <property type="match status" value="1"/>
</dbReference>
<dbReference type="PROSITE" id="PS51831">
    <property type="entry name" value="HD"/>
    <property type="match status" value="1"/>
</dbReference>
<gene>
    <name evidence="1" type="primary">cca</name>
    <name type="ordered locus">BPSL0265</name>
</gene>
<reference key="1">
    <citation type="journal article" date="2004" name="Proc. Natl. Acad. Sci. U.S.A.">
        <title>Genomic plasticity of the causative agent of melioidosis, Burkholderia pseudomallei.</title>
        <authorList>
            <person name="Holden M.T.G."/>
            <person name="Titball R.W."/>
            <person name="Peacock S.J."/>
            <person name="Cerdeno-Tarraga A.-M."/>
            <person name="Atkins T."/>
            <person name="Crossman L.C."/>
            <person name="Pitt T."/>
            <person name="Churcher C."/>
            <person name="Mungall K.L."/>
            <person name="Bentley S.D."/>
            <person name="Sebaihia M."/>
            <person name="Thomson N.R."/>
            <person name="Bason N."/>
            <person name="Beacham I.R."/>
            <person name="Brooks K."/>
            <person name="Brown K.A."/>
            <person name="Brown N.F."/>
            <person name="Challis G.L."/>
            <person name="Cherevach I."/>
            <person name="Chillingworth T."/>
            <person name="Cronin A."/>
            <person name="Crossett B."/>
            <person name="Davis P."/>
            <person name="DeShazer D."/>
            <person name="Feltwell T."/>
            <person name="Fraser A."/>
            <person name="Hance Z."/>
            <person name="Hauser H."/>
            <person name="Holroyd S."/>
            <person name="Jagels K."/>
            <person name="Keith K.E."/>
            <person name="Maddison M."/>
            <person name="Moule S."/>
            <person name="Price C."/>
            <person name="Quail M.A."/>
            <person name="Rabbinowitsch E."/>
            <person name="Rutherford K."/>
            <person name="Sanders M."/>
            <person name="Simmonds M."/>
            <person name="Songsivilai S."/>
            <person name="Stevens K."/>
            <person name="Tumapa S."/>
            <person name="Vesaratchavest M."/>
            <person name="Whitehead S."/>
            <person name="Yeats C."/>
            <person name="Barrell B.G."/>
            <person name="Oyston P.C.F."/>
            <person name="Parkhill J."/>
        </authorList>
    </citation>
    <scope>NUCLEOTIDE SEQUENCE [LARGE SCALE GENOMIC DNA]</scope>
    <source>
        <strain>K96243</strain>
    </source>
</reference>
<evidence type="ECO:0000255" key="1">
    <source>
        <dbReference type="HAMAP-Rule" id="MF_01261"/>
    </source>
</evidence>